<sequence length="84" mass="9053">MAHKKAGGSTRNGRDSNPKYLGVKRYGGEFVKAGTIILRQRGTKTHPGVNVGCGKDHTLFALKDGTVKFHVGGALNRKFVSIDE</sequence>
<accession>B0TYK1</accession>
<reference key="1">
    <citation type="submission" date="2007-12" db="EMBL/GenBank/DDBJ databases">
        <title>Complete sequence of chromosome of Francisella philomiragia subsp. philomiragia ATCC 25017.</title>
        <authorList>
            <consortium name="US DOE Joint Genome Institute"/>
            <person name="Copeland A."/>
            <person name="Lucas S."/>
            <person name="Lapidus A."/>
            <person name="Barry K."/>
            <person name="Detter J.C."/>
            <person name="Glavina del Rio T."/>
            <person name="Hammon N."/>
            <person name="Israni S."/>
            <person name="Dalin E."/>
            <person name="Tice H."/>
            <person name="Pitluck S."/>
            <person name="Chain P."/>
            <person name="Malfatti S."/>
            <person name="Shin M."/>
            <person name="Vergez L."/>
            <person name="Schmutz J."/>
            <person name="Larimer F."/>
            <person name="Land M."/>
            <person name="Hauser L."/>
            <person name="Richardson P."/>
        </authorList>
    </citation>
    <scope>NUCLEOTIDE SEQUENCE [LARGE SCALE GENOMIC DNA]</scope>
    <source>
        <strain>ATCC 25017 / CCUG 19701 / FSC 153 / O#319-036</strain>
    </source>
</reference>
<organism>
    <name type="scientific">Francisella philomiragia subsp. philomiragia (strain ATCC 25017 / CCUG 19701 / FSC 153 / O#319-036)</name>
    <dbReference type="NCBI Taxonomy" id="484022"/>
    <lineage>
        <taxon>Bacteria</taxon>
        <taxon>Pseudomonadati</taxon>
        <taxon>Pseudomonadota</taxon>
        <taxon>Gammaproteobacteria</taxon>
        <taxon>Thiotrichales</taxon>
        <taxon>Francisellaceae</taxon>
        <taxon>Francisella</taxon>
    </lineage>
</organism>
<dbReference type="EMBL" id="CP000937">
    <property type="protein sequence ID" value="ABZ86366.1"/>
    <property type="molecule type" value="Genomic_DNA"/>
</dbReference>
<dbReference type="SMR" id="B0TYK1"/>
<dbReference type="KEGG" id="fph:Fphi_0145"/>
<dbReference type="eggNOG" id="COG0211">
    <property type="taxonomic scope" value="Bacteria"/>
</dbReference>
<dbReference type="HOGENOM" id="CLU_095424_4_1_6"/>
<dbReference type="GO" id="GO:0022625">
    <property type="term" value="C:cytosolic large ribosomal subunit"/>
    <property type="evidence" value="ECO:0007669"/>
    <property type="project" value="TreeGrafter"/>
</dbReference>
<dbReference type="GO" id="GO:0003735">
    <property type="term" value="F:structural constituent of ribosome"/>
    <property type="evidence" value="ECO:0007669"/>
    <property type="project" value="InterPro"/>
</dbReference>
<dbReference type="GO" id="GO:0006412">
    <property type="term" value="P:translation"/>
    <property type="evidence" value="ECO:0007669"/>
    <property type="project" value="UniProtKB-UniRule"/>
</dbReference>
<dbReference type="FunFam" id="2.40.50.100:FF:000001">
    <property type="entry name" value="50S ribosomal protein L27"/>
    <property type="match status" value="1"/>
</dbReference>
<dbReference type="Gene3D" id="2.40.50.100">
    <property type="match status" value="1"/>
</dbReference>
<dbReference type="HAMAP" id="MF_00539">
    <property type="entry name" value="Ribosomal_bL27"/>
    <property type="match status" value="1"/>
</dbReference>
<dbReference type="InterPro" id="IPR001684">
    <property type="entry name" value="Ribosomal_bL27"/>
</dbReference>
<dbReference type="InterPro" id="IPR018261">
    <property type="entry name" value="Ribosomal_bL27_CS"/>
</dbReference>
<dbReference type="NCBIfam" id="TIGR00062">
    <property type="entry name" value="L27"/>
    <property type="match status" value="1"/>
</dbReference>
<dbReference type="PANTHER" id="PTHR15893:SF0">
    <property type="entry name" value="LARGE RIBOSOMAL SUBUNIT PROTEIN BL27M"/>
    <property type="match status" value="1"/>
</dbReference>
<dbReference type="PANTHER" id="PTHR15893">
    <property type="entry name" value="RIBOSOMAL PROTEIN L27"/>
    <property type="match status" value="1"/>
</dbReference>
<dbReference type="Pfam" id="PF01016">
    <property type="entry name" value="Ribosomal_L27"/>
    <property type="match status" value="1"/>
</dbReference>
<dbReference type="PRINTS" id="PR00063">
    <property type="entry name" value="RIBOSOMALL27"/>
</dbReference>
<dbReference type="SUPFAM" id="SSF110324">
    <property type="entry name" value="Ribosomal L27 protein-like"/>
    <property type="match status" value="1"/>
</dbReference>
<dbReference type="PROSITE" id="PS00831">
    <property type="entry name" value="RIBOSOMAL_L27"/>
    <property type="match status" value="1"/>
</dbReference>
<protein>
    <recommendedName>
        <fullName evidence="1">Large ribosomal subunit protein bL27</fullName>
    </recommendedName>
    <alternativeName>
        <fullName evidence="3">50S ribosomal protein L27</fullName>
    </alternativeName>
</protein>
<comment type="similarity">
    <text evidence="1">Belongs to the bacterial ribosomal protein bL27 family.</text>
</comment>
<feature type="chain" id="PRO_1000081890" description="Large ribosomal subunit protein bL27">
    <location>
        <begin position="1"/>
        <end position="84"/>
    </location>
</feature>
<feature type="region of interest" description="Disordered" evidence="2">
    <location>
        <begin position="1"/>
        <end position="20"/>
    </location>
</feature>
<proteinExistence type="inferred from homology"/>
<gene>
    <name evidence="1" type="primary">rpmA</name>
    <name type="ordered locus">Fphi_0145</name>
</gene>
<keyword id="KW-0687">Ribonucleoprotein</keyword>
<keyword id="KW-0689">Ribosomal protein</keyword>
<name>RL27_FRAP2</name>
<evidence type="ECO:0000255" key="1">
    <source>
        <dbReference type="HAMAP-Rule" id="MF_00539"/>
    </source>
</evidence>
<evidence type="ECO:0000256" key="2">
    <source>
        <dbReference type="SAM" id="MobiDB-lite"/>
    </source>
</evidence>
<evidence type="ECO:0000305" key="3"/>